<feature type="chain" id="PRO_0000386098" description="GTPase Obg">
    <location>
        <begin position="1"/>
        <end position="352"/>
    </location>
</feature>
<feature type="domain" description="Obg" evidence="2">
    <location>
        <begin position="1"/>
        <end position="159"/>
    </location>
</feature>
<feature type="domain" description="OBG-type G" evidence="1">
    <location>
        <begin position="160"/>
        <end position="328"/>
    </location>
</feature>
<feature type="region of interest" description="Disordered" evidence="3">
    <location>
        <begin position="122"/>
        <end position="142"/>
    </location>
</feature>
<feature type="binding site" evidence="1">
    <location>
        <begin position="166"/>
        <end position="173"/>
    </location>
    <ligand>
        <name>GTP</name>
        <dbReference type="ChEBI" id="CHEBI:37565"/>
    </ligand>
</feature>
<feature type="binding site" evidence="1">
    <location>
        <position position="173"/>
    </location>
    <ligand>
        <name>Mg(2+)</name>
        <dbReference type="ChEBI" id="CHEBI:18420"/>
    </ligand>
</feature>
<feature type="binding site" evidence="1">
    <location>
        <begin position="191"/>
        <end position="195"/>
    </location>
    <ligand>
        <name>GTP</name>
        <dbReference type="ChEBI" id="CHEBI:37565"/>
    </ligand>
</feature>
<feature type="binding site" evidence="1">
    <location>
        <position position="193"/>
    </location>
    <ligand>
        <name>Mg(2+)</name>
        <dbReference type="ChEBI" id="CHEBI:18420"/>
    </ligand>
</feature>
<feature type="binding site" evidence="1">
    <location>
        <begin position="212"/>
        <end position="215"/>
    </location>
    <ligand>
        <name>GTP</name>
        <dbReference type="ChEBI" id="CHEBI:37565"/>
    </ligand>
</feature>
<feature type="binding site" evidence="1">
    <location>
        <begin position="280"/>
        <end position="283"/>
    </location>
    <ligand>
        <name>GTP</name>
        <dbReference type="ChEBI" id="CHEBI:37565"/>
    </ligand>
</feature>
<feature type="binding site" evidence="1">
    <location>
        <begin position="309"/>
        <end position="311"/>
    </location>
    <ligand>
        <name>GTP</name>
        <dbReference type="ChEBI" id="CHEBI:37565"/>
    </ligand>
</feature>
<keyword id="KW-0963">Cytoplasm</keyword>
<keyword id="KW-0342">GTP-binding</keyword>
<keyword id="KW-0378">Hydrolase</keyword>
<keyword id="KW-0460">Magnesium</keyword>
<keyword id="KW-0479">Metal-binding</keyword>
<keyword id="KW-0547">Nucleotide-binding</keyword>
<keyword id="KW-1185">Reference proteome</keyword>
<accession>Q2G983</accession>
<evidence type="ECO:0000255" key="1">
    <source>
        <dbReference type="HAMAP-Rule" id="MF_01454"/>
    </source>
</evidence>
<evidence type="ECO:0000255" key="2">
    <source>
        <dbReference type="PROSITE-ProRule" id="PRU01231"/>
    </source>
</evidence>
<evidence type="ECO:0000256" key="3">
    <source>
        <dbReference type="SAM" id="MobiDB-lite"/>
    </source>
</evidence>
<evidence type="ECO:0000305" key="4"/>
<sequence length="352" mass="37895">MHFLDQAKIFIRSGQGGPGAVSFRREKYVEYGGPDGGDGGKGGDIIFEAVTGLNTLIDFRYAQHFKAQRGHGGAGKNRTGAGGNDLVIKVPVGTQVLDDDRETVLLDLTEAGQREILLRGGDGGRGNASYKTSTNRAPRQHGPGWPGEEMYVWLRLKLLADAGLVGLPNAGKSTFINQITNTKAKVGDYAFTTLRPQLGVVRHRNREFVLADIPGLIEGAADGAGIGDRFLGHIERCRVLIHLIDIHSDVDPVEAMHIVEGELEAYGAGLDEKPRLVALNKIDLVDKELVKAFQDELLEGGADRVFPISGATGKGMDALLDAVLEYLPAATVTERPTGEVEEAEDQKPWSPI</sequence>
<proteinExistence type="inferred from homology"/>
<comment type="function">
    <text evidence="1">An essential GTPase which binds GTP, GDP and possibly (p)ppGpp with moderate affinity, with high nucleotide exchange rates and a fairly low GTP hydrolysis rate. Plays a role in control of the cell cycle, stress response, ribosome biogenesis and in those bacteria that undergo differentiation, in morphogenesis control.</text>
</comment>
<comment type="cofactor">
    <cofactor evidence="1">
        <name>Mg(2+)</name>
        <dbReference type="ChEBI" id="CHEBI:18420"/>
    </cofactor>
</comment>
<comment type="subunit">
    <text evidence="1">Monomer.</text>
</comment>
<comment type="subcellular location">
    <subcellularLocation>
        <location evidence="1">Cytoplasm</location>
    </subcellularLocation>
</comment>
<comment type="similarity">
    <text evidence="1">Belongs to the TRAFAC class OBG-HflX-like GTPase superfamily. OBG GTPase family.</text>
</comment>
<comment type="sequence caution" evidence="4">
    <conflict type="erroneous initiation">
        <sequence resource="EMBL-CDS" id="ABD25590"/>
    </conflict>
    <text>Extended N-terminus.</text>
</comment>
<reference key="1">
    <citation type="submission" date="2006-01" db="EMBL/GenBank/DDBJ databases">
        <title>Complete sequence of Novosphingobium aromaticivorans DSM 12444.</title>
        <authorList>
            <consortium name="US DOE Joint Genome Institute"/>
            <person name="Copeland A."/>
            <person name="Lucas S."/>
            <person name="Lapidus A."/>
            <person name="Barry K."/>
            <person name="Detter J.C."/>
            <person name="Glavina T."/>
            <person name="Hammon N."/>
            <person name="Israni S."/>
            <person name="Pitluck S."/>
            <person name="Chain P."/>
            <person name="Malfatti S."/>
            <person name="Shin M."/>
            <person name="Vergez L."/>
            <person name="Schmutz J."/>
            <person name="Larimer F."/>
            <person name="Land M."/>
            <person name="Kyrpides N."/>
            <person name="Ivanova N."/>
            <person name="Fredrickson J."/>
            <person name="Balkwill D."/>
            <person name="Romine M.F."/>
            <person name="Richardson P."/>
        </authorList>
    </citation>
    <scope>NUCLEOTIDE SEQUENCE [LARGE SCALE GENOMIC DNA]</scope>
    <source>
        <strain>ATCC 700278 / DSM 12444 / CCUG 56034 / CIP 105152 / NBRC 16084 / F199</strain>
    </source>
</reference>
<protein>
    <recommendedName>
        <fullName evidence="1">GTPase Obg</fullName>
        <ecNumber evidence="1">3.6.5.-</ecNumber>
    </recommendedName>
    <alternativeName>
        <fullName evidence="1">GTP-binding protein Obg</fullName>
    </alternativeName>
</protein>
<name>OBG_NOVAD</name>
<dbReference type="EC" id="3.6.5.-" evidence="1"/>
<dbReference type="EMBL" id="CP000248">
    <property type="protein sequence ID" value="ABD25590.1"/>
    <property type="status" value="ALT_INIT"/>
    <property type="molecule type" value="Genomic_DNA"/>
</dbReference>
<dbReference type="RefSeq" id="WP_011444804.1">
    <property type="nucleotide sequence ID" value="NC_007794.1"/>
</dbReference>
<dbReference type="SMR" id="Q2G983"/>
<dbReference type="STRING" id="279238.Saro_1145"/>
<dbReference type="KEGG" id="nar:Saro_1145"/>
<dbReference type="eggNOG" id="COG0536">
    <property type="taxonomic scope" value="Bacteria"/>
</dbReference>
<dbReference type="HOGENOM" id="CLU_011747_2_0_5"/>
<dbReference type="Proteomes" id="UP000009134">
    <property type="component" value="Chromosome"/>
</dbReference>
<dbReference type="GO" id="GO:0005737">
    <property type="term" value="C:cytoplasm"/>
    <property type="evidence" value="ECO:0007669"/>
    <property type="project" value="UniProtKB-SubCell"/>
</dbReference>
<dbReference type="GO" id="GO:0005525">
    <property type="term" value="F:GTP binding"/>
    <property type="evidence" value="ECO:0007669"/>
    <property type="project" value="UniProtKB-UniRule"/>
</dbReference>
<dbReference type="GO" id="GO:0003924">
    <property type="term" value="F:GTPase activity"/>
    <property type="evidence" value="ECO:0007669"/>
    <property type="project" value="UniProtKB-UniRule"/>
</dbReference>
<dbReference type="GO" id="GO:0000287">
    <property type="term" value="F:magnesium ion binding"/>
    <property type="evidence" value="ECO:0007669"/>
    <property type="project" value="InterPro"/>
</dbReference>
<dbReference type="GO" id="GO:0042254">
    <property type="term" value="P:ribosome biogenesis"/>
    <property type="evidence" value="ECO:0007669"/>
    <property type="project" value="UniProtKB-UniRule"/>
</dbReference>
<dbReference type="CDD" id="cd01898">
    <property type="entry name" value="Obg"/>
    <property type="match status" value="1"/>
</dbReference>
<dbReference type="FunFam" id="2.70.210.12:FF:000001">
    <property type="entry name" value="GTPase Obg"/>
    <property type="match status" value="1"/>
</dbReference>
<dbReference type="Gene3D" id="2.70.210.12">
    <property type="entry name" value="GTP1/OBG domain"/>
    <property type="match status" value="1"/>
</dbReference>
<dbReference type="Gene3D" id="3.40.50.300">
    <property type="entry name" value="P-loop containing nucleotide triphosphate hydrolases"/>
    <property type="match status" value="1"/>
</dbReference>
<dbReference type="HAMAP" id="MF_01454">
    <property type="entry name" value="GTPase_Obg"/>
    <property type="match status" value="1"/>
</dbReference>
<dbReference type="InterPro" id="IPR031167">
    <property type="entry name" value="G_OBG"/>
</dbReference>
<dbReference type="InterPro" id="IPR006073">
    <property type="entry name" value="GTP-bd"/>
</dbReference>
<dbReference type="InterPro" id="IPR014100">
    <property type="entry name" value="GTP-bd_Obg/CgtA"/>
</dbReference>
<dbReference type="InterPro" id="IPR006074">
    <property type="entry name" value="GTP1-OBG_CS"/>
</dbReference>
<dbReference type="InterPro" id="IPR006169">
    <property type="entry name" value="GTP1_OBG_dom"/>
</dbReference>
<dbReference type="InterPro" id="IPR036726">
    <property type="entry name" value="GTP1_OBG_dom_sf"/>
</dbReference>
<dbReference type="InterPro" id="IPR045086">
    <property type="entry name" value="OBG_GTPase"/>
</dbReference>
<dbReference type="InterPro" id="IPR027417">
    <property type="entry name" value="P-loop_NTPase"/>
</dbReference>
<dbReference type="InterPro" id="IPR005225">
    <property type="entry name" value="Small_GTP-bd"/>
</dbReference>
<dbReference type="NCBIfam" id="TIGR02729">
    <property type="entry name" value="Obg_CgtA"/>
    <property type="match status" value="1"/>
</dbReference>
<dbReference type="NCBIfam" id="NF008955">
    <property type="entry name" value="PRK12297.1"/>
    <property type="match status" value="1"/>
</dbReference>
<dbReference type="NCBIfam" id="NF008956">
    <property type="entry name" value="PRK12299.1"/>
    <property type="match status" value="1"/>
</dbReference>
<dbReference type="NCBIfam" id="TIGR00231">
    <property type="entry name" value="small_GTP"/>
    <property type="match status" value="1"/>
</dbReference>
<dbReference type="PANTHER" id="PTHR11702">
    <property type="entry name" value="DEVELOPMENTALLY REGULATED GTP-BINDING PROTEIN-RELATED"/>
    <property type="match status" value="1"/>
</dbReference>
<dbReference type="PANTHER" id="PTHR11702:SF31">
    <property type="entry name" value="MITOCHONDRIAL RIBOSOME-ASSOCIATED GTPASE 2"/>
    <property type="match status" value="1"/>
</dbReference>
<dbReference type="Pfam" id="PF01018">
    <property type="entry name" value="GTP1_OBG"/>
    <property type="match status" value="1"/>
</dbReference>
<dbReference type="Pfam" id="PF01926">
    <property type="entry name" value="MMR_HSR1"/>
    <property type="match status" value="1"/>
</dbReference>
<dbReference type="PIRSF" id="PIRSF002401">
    <property type="entry name" value="GTP_bd_Obg/CgtA"/>
    <property type="match status" value="1"/>
</dbReference>
<dbReference type="PRINTS" id="PR00326">
    <property type="entry name" value="GTP1OBG"/>
</dbReference>
<dbReference type="SUPFAM" id="SSF82051">
    <property type="entry name" value="Obg GTP-binding protein N-terminal domain"/>
    <property type="match status" value="1"/>
</dbReference>
<dbReference type="SUPFAM" id="SSF52540">
    <property type="entry name" value="P-loop containing nucleoside triphosphate hydrolases"/>
    <property type="match status" value="1"/>
</dbReference>
<dbReference type="PROSITE" id="PS51710">
    <property type="entry name" value="G_OBG"/>
    <property type="match status" value="1"/>
</dbReference>
<dbReference type="PROSITE" id="PS00905">
    <property type="entry name" value="GTP1_OBG"/>
    <property type="match status" value="1"/>
</dbReference>
<dbReference type="PROSITE" id="PS51883">
    <property type="entry name" value="OBG"/>
    <property type="match status" value="1"/>
</dbReference>
<gene>
    <name evidence="1" type="primary">obg</name>
    <name type="ordered locus">Saro_1145</name>
</gene>
<organism>
    <name type="scientific">Novosphingobium aromaticivorans (strain ATCC 700278 / DSM 12444 / CCUG 56034 / CIP 105152 / NBRC 16084 / F199)</name>
    <dbReference type="NCBI Taxonomy" id="279238"/>
    <lineage>
        <taxon>Bacteria</taxon>
        <taxon>Pseudomonadati</taxon>
        <taxon>Pseudomonadota</taxon>
        <taxon>Alphaproteobacteria</taxon>
        <taxon>Sphingomonadales</taxon>
        <taxon>Sphingomonadaceae</taxon>
        <taxon>Novosphingobium</taxon>
    </lineage>
</organism>